<feature type="chain" id="PRO_0000282572" description="Beta-citrylglutamate synthase B">
    <location>
        <begin position="1"/>
        <end position="387"/>
    </location>
</feature>
<feature type="domain" description="ATP-grasp" evidence="2">
    <location>
        <begin position="119"/>
        <end position="304"/>
    </location>
</feature>
<feature type="region of interest" description="Disordered" evidence="3">
    <location>
        <begin position="325"/>
        <end position="361"/>
    </location>
</feature>
<feature type="compositionally biased region" description="Low complexity" evidence="3">
    <location>
        <begin position="337"/>
        <end position="352"/>
    </location>
</feature>
<feature type="binding site" evidence="1">
    <location>
        <position position="158"/>
    </location>
    <ligand>
        <name>ATP</name>
        <dbReference type="ChEBI" id="CHEBI:30616"/>
    </ligand>
</feature>
<feature type="binding site" evidence="2">
    <location>
        <begin position="193"/>
        <end position="203"/>
    </location>
    <ligand>
        <name>ATP</name>
        <dbReference type="ChEBI" id="CHEBI:30616"/>
    </ligand>
</feature>
<feature type="binding site" evidence="1">
    <location>
        <position position="219"/>
    </location>
    <ligand>
        <name>ATP</name>
        <dbReference type="ChEBI" id="CHEBI:30616"/>
    </ligand>
</feature>
<feature type="binding site" evidence="2">
    <location>
        <position position="264"/>
    </location>
    <ligand>
        <name>Mg(2+)</name>
        <dbReference type="ChEBI" id="CHEBI:18420"/>
        <label>1</label>
    </ligand>
</feature>
<feature type="binding site" evidence="2">
    <location>
        <position position="264"/>
    </location>
    <ligand>
        <name>Mn(2+)</name>
        <dbReference type="ChEBI" id="CHEBI:29035"/>
        <label>1</label>
    </ligand>
</feature>
<feature type="binding site" evidence="2">
    <location>
        <position position="277"/>
    </location>
    <ligand>
        <name>Mg(2+)</name>
        <dbReference type="ChEBI" id="CHEBI:18420"/>
        <label>1</label>
    </ligand>
</feature>
<feature type="binding site" evidence="2">
    <location>
        <position position="277"/>
    </location>
    <ligand>
        <name>Mg(2+)</name>
        <dbReference type="ChEBI" id="CHEBI:18420"/>
        <label>2</label>
    </ligand>
</feature>
<feature type="binding site" evidence="2">
    <location>
        <position position="277"/>
    </location>
    <ligand>
        <name>Mn(2+)</name>
        <dbReference type="ChEBI" id="CHEBI:29035"/>
        <label>1</label>
    </ligand>
</feature>
<feature type="binding site" evidence="2">
    <location>
        <position position="277"/>
    </location>
    <ligand>
        <name>Mn(2+)</name>
        <dbReference type="ChEBI" id="CHEBI:29035"/>
        <label>2</label>
    </ligand>
</feature>
<feature type="binding site" evidence="2">
    <location>
        <position position="279"/>
    </location>
    <ligand>
        <name>Mg(2+)</name>
        <dbReference type="ChEBI" id="CHEBI:18420"/>
        <label>2</label>
    </ligand>
</feature>
<feature type="binding site" evidence="2">
    <location>
        <position position="279"/>
    </location>
    <ligand>
        <name>Mn(2+)</name>
        <dbReference type="ChEBI" id="CHEBI:29035"/>
        <label>2</label>
    </ligand>
</feature>
<feature type="splice variant" id="VSP_024200" description="In isoform 2 and isoform 3." evidence="6">
    <location>
        <begin position="1"/>
        <end position="57"/>
    </location>
</feature>
<feature type="splice variant" id="VSP_024201" description="In isoform 2 and isoform 3." evidence="6">
    <original>L</original>
    <variation>M</variation>
    <location>
        <position position="58"/>
    </location>
</feature>
<feature type="splice variant" id="VSP_024202" description="In isoform 3." evidence="6">
    <original>VGFIAFDKACNLDVAGIIADYAASLLP</original>
    <variation>PFQEPKYTNTNKQKILRENTFLLPPSC</variation>
    <location>
        <begin position="282"/>
        <end position="308"/>
    </location>
</feature>
<feature type="splice variant" id="VSP_024203" description="In isoform 3." evidence="6">
    <location>
        <begin position="309"/>
        <end position="387"/>
    </location>
</feature>
<dbReference type="EC" id="6.3.1.17" evidence="4 5"/>
<dbReference type="EC" id="6.3.2.41" evidence="4"/>
<dbReference type="EMBL" id="AK173135">
    <property type="protein sequence ID" value="BAD32413.1"/>
    <property type="status" value="ALT_INIT"/>
    <property type="molecule type" value="mRNA"/>
</dbReference>
<dbReference type="EMBL" id="AK016936">
    <property type="protein sequence ID" value="BAB30506.1"/>
    <property type="molecule type" value="mRNA"/>
</dbReference>
<dbReference type="EMBL" id="AK039398">
    <property type="protein sequence ID" value="BAC30339.1"/>
    <property type="molecule type" value="mRNA"/>
</dbReference>
<dbReference type="EMBL" id="BC052078">
    <property type="protein sequence ID" value="AAH52078.1"/>
    <property type="molecule type" value="mRNA"/>
</dbReference>
<dbReference type="CCDS" id="CCDS39622.1">
    <molecule id="Q80WS1-1"/>
</dbReference>
<dbReference type="RefSeq" id="NP_081940.1">
    <molecule id="Q80WS1-1"/>
    <property type="nucleotide sequence ID" value="NM_027664.1"/>
</dbReference>
<dbReference type="RefSeq" id="XP_011239417.1">
    <property type="nucleotide sequence ID" value="XM_011241115.1"/>
</dbReference>
<dbReference type="RefSeq" id="XP_011239418.1">
    <property type="nucleotide sequence ID" value="XM_011241116.2"/>
</dbReference>
<dbReference type="RefSeq" id="XP_011239419.1">
    <property type="nucleotide sequence ID" value="XM_011241117.1"/>
</dbReference>
<dbReference type="RefSeq" id="XP_011239420.1">
    <property type="nucleotide sequence ID" value="XM_011241118.2"/>
</dbReference>
<dbReference type="RefSeq" id="XP_011239421.1">
    <property type="nucleotide sequence ID" value="XM_011241119.1"/>
</dbReference>
<dbReference type="RefSeq" id="XP_011239422.1">
    <property type="nucleotide sequence ID" value="XM_011241120.1"/>
</dbReference>
<dbReference type="RefSeq" id="XP_030110915.1">
    <molecule id="Q80WS1-1"/>
    <property type="nucleotide sequence ID" value="XM_030255055.2"/>
</dbReference>
<dbReference type="RefSeq" id="XP_030110916.1">
    <molecule id="Q80WS1-1"/>
    <property type="nucleotide sequence ID" value="XM_030255056.2"/>
</dbReference>
<dbReference type="RefSeq" id="XP_030110917.1">
    <molecule id="Q80WS1-1"/>
    <property type="nucleotide sequence ID" value="XM_030255057.2"/>
</dbReference>
<dbReference type="RefSeq" id="XP_030110918.1">
    <molecule id="Q80WS1-1"/>
    <property type="nucleotide sequence ID" value="XM_030255058.2"/>
</dbReference>
<dbReference type="RefSeq" id="XP_036021620.1">
    <molecule id="Q80WS1-1"/>
    <property type="nucleotide sequence ID" value="XM_036165727.1"/>
</dbReference>
<dbReference type="SMR" id="Q80WS1"/>
<dbReference type="FunCoup" id="Q80WS1">
    <property type="interactions" value="519"/>
</dbReference>
<dbReference type="STRING" id="10090.ENSMUSP00000064467"/>
<dbReference type="PhosphoSitePlus" id="Q80WS1"/>
<dbReference type="PaxDb" id="10090-ENSMUSP00000064467"/>
<dbReference type="PeptideAtlas" id="Q80WS1"/>
<dbReference type="ProteomicsDB" id="255270">
    <molecule id="Q80WS1-1"/>
</dbReference>
<dbReference type="ProteomicsDB" id="255271">
    <molecule id="Q80WS1-2"/>
</dbReference>
<dbReference type="ProteomicsDB" id="255272">
    <molecule id="Q80WS1-3"/>
</dbReference>
<dbReference type="Antibodypedia" id="23082">
    <property type="antibodies" value="73 antibodies from 22 providers"/>
</dbReference>
<dbReference type="Ensembl" id="ENSMUST00000068242.9">
    <molecule id="Q80WS1-1"/>
    <property type="protein sequence ID" value="ENSMUSP00000064467.7"/>
    <property type="gene ID" value="ENSMUSG00000040649.16"/>
</dbReference>
<dbReference type="Ensembl" id="ENSMUST00000146274.8">
    <molecule id="Q80WS1-3"/>
    <property type="protein sequence ID" value="ENSMUSP00000138104.2"/>
    <property type="gene ID" value="ENSMUSG00000040649.16"/>
</dbReference>
<dbReference type="Ensembl" id="ENSMUST00000204731.2">
    <molecule id="Q80WS1-2"/>
    <property type="protein sequence ID" value="ENSMUSP00000144770.2"/>
    <property type="gene ID" value="ENSMUSG00000040649.16"/>
</dbReference>
<dbReference type="GeneID" id="108653"/>
<dbReference type="KEGG" id="mmu:108653"/>
<dbReference type="UCSC" id="uc009dpf.1">
    <molecule id="Q80WS1-2"/>
    <property type="organism name" value="mouse"/>
</dbReference>
<dbReference type="UCSC" id="uc009dpg.1">
    <molecule id="Q80WS1-1"/>
    <property type="organism name" value="mouse"/>
</dbReference>
<dbReference type="AGR" id="MGI:1918325"/>
<dbReference type="CTD" id="57494"/>
<dbReference type="MGI" id="MGI:1918325">
    <property type="gene designation" value="Rimklb"/>
</dbReference>
<dbReference type="VEuPathDB" id="HostDB:ENSMUSG00000040649"/>
<dbReference type="eggNOG" id="ENOG502QT4M">
    <property type="taxonomic scope" value="Eukaryota"/>
</dbReference>
<dbReference type="GeneTree" id="ENSGT00390000014577"/>
<dbReference type="HOGENOM" id="CLU_054353_3_0_1"/>
<dbReference type="InParanoid" id="Q80WS1"/>
<dbReference type="OMA" id="CYMNIAS"/>
<dbReference type="OrthoDB" id="10265738at2759"/>
<dbReference type="PhylomeDB" id="Q80WS1"/>
<dbReference type="TreeFam" id="TF332035"/>
<dbReference type="BRENDA" id="6.3.1.17">
    <property type="organism ID" value="3474"/>
</dbReference>
<dbReference type="BRENDA" id="6.3.2.41">
    <property type="organism ID" value="3474"/>
</dbReference>
<dbReference type="BRENDA" id="6.3.2.B11">
    <property type="organism ID" value="3474"/>
</dbReference>
<dbReference type="Reactome" id="R-MMU-8964539">
    <property type="pathway name" value="Glutamate and glutamine metabolism"/>
</dbReference>
<dbReference type="BioGRID-ORCS" id="108653">
    <property type="hits" value="0 hits in 77 CRISPR screens"/>
</dbReference>
<dbReference type="ChiTaRS" id="Rimklb">
    <property type="organism name" value="mouse"/>
</dbReference>
<dbReference type="PRO" id="PR:Q80WS1"/>
<dbReference type="Proteomes" id="UP000000589">
    <property type="component" value="Chromosome 6"/>
</dbReference>
<dbReference type="RNAct" id="Q80WS1">
    <property type="molecule type" value="protein"/>
</dbReference>
<dbReference type="Bgee" id="ENSMUSG00000040649">
    <property type="expression patterns" value="Expressed in decidua and 218 other cell types or tissues"/>
</dbReference>
<dbReference type="ExpressionAtlas" id="Q80WS1">
    <property type="expression patterns" value="baseline and differential"/>
</dbReference>
<dbReference type="GO" id="GO:0005737">
    <property type="term" value="C:cytoplasm"/>
    <property type="evidence" value="ECO:0000314"/>
    <property type="project" value="UniProtKB"/>
</dbReference>
<dbReference type="GO" id="GO:0005524">
    <property type="term" value="F:ATP binding"/>
    <property type="evidence" value="ECO:0007669"/>
    <property type="project" value="UniProtKB-KW"/>
</dbReference>
<dbReference type="GO" id="GO:0072591">
    <property type="term" value="F:citrate-L-glutamate ligase activity"/>
    <property type="evidence" value="ECO:0000314"/>
    <property type="project" value="UniProtKB"/>
</dbReference>
<dbReference type="GO" id="GO:0046872">
    <property type="term" value="F:metal ion binding"/>
    <property type="evidence" value="ECO:0007669"/>
    <property type="project" value="UniProtKB-KW"/>
</dbReference>
<dbReference type="GO" id="GO:0072590">
    <property type="term" value="F:N-acetyl-L-aspartate-L-glutamate ligase activity"/>
    <property type="evidence" value="ECO:0000314"/>
    <property type="project" value="UniProtKB"/>
</dbReference>
<dbReference type="GO" id="GO:0036211">
    <property type="term" value="P:protein modification process"/>
    <property type="evidence" value="ECO:0007669"/>
    <property type="project" value="InterPro"/>
</dbReference>
<dbReference type="FunFam" id="3.30.1490.20:FF:000011">
    <property type="entry name" value="beta-citrylglutamate synthase B isoform X1"/>
    <property type="match status" value="1"/>
</dbReference>
<dbReference type="FunFam" id="3.30.470.20:FF:000022">
    <property type="entry name" value="beta-citrylglutamate synthase B isoform X1"/>
    <property type="match status" value="1"/>
</dbReference>
<dbReference type="FunFam" id="3.40.50.20:FF:000014">
    <property type="entry name" value="beta-citrylglutamate synthase B isoform X1"/>
    <property type="match status" value="1"/>
</dbReference>
<dbReference type="Gene3D" id="3.40.50.20">
    <property type="match status" value="1"/>
</dbReference>
<dbReference type="Gene3D" id="3.30.1490.20">
    <property type="entry name" value="ATP-grasp fold, A domain"/>
    <property type="match status" value="1"/>
</dbReference>
<dbReference type="Gene3D" id="3.30.470.20">
    <property type="entry name" value="ATP-grasp fold, B domain"/>
    <property type="match status" value="1"/>
</dbReference>
<dbReference type="InterPro" id="IPR011761">
    <property type="entry name" value="ATP-grasp"/>
</dbReference>
<dbReference type="InterPro" id="IPR013651">
    <property type="entry name" value="ATP-grasp_RimK-type"/>
</dbReference>
<dbReference type="InterPro" id="IPR013815">
    <property type="entry name" value="ATP_grasp_subdomain_1"/>
</dbReference>
<dbReference type="InterPro" id="IPR004666">
    <property type="entry name" value="Rp_bS6_RimK/Lys_biosynth_LsyX"/>
</dbReference>
<dbReference type="NCBIfam" id="TIGR00768">
    <property type="entry name" value="rimK_fam"/>
    <property type="match status" value="1"/>
</dbReference>
<dbReference type="PANTHER" id="PTHR21621:SF5">
    <property type="entry name" value="BETA-CITRYLGLUTAMATE SYNTHASE B"/>
    <property type="match status" value="1"/>
</dbReference>
<dbReference type="PANTHER" id="PTHR21621">
    <property type="entry name" value="RIBOSOMAL PROTEIN S6 MODIFICATION PROTEIN"/>
    <property type="match status" value="1"/>
</dbReference>
<dbReference type="Pfam" id="PF08443">
    <property type="entry name" value="RimK"/>
    <property type="match status" value="1"/>
</dbReference>
<dbReference type="SUPFAM" id="SSF56059">
    <property type="entry name" value="Glutathione synthetase ATP-binding domain-like"/>
    <property type="match status" value="1"/>
</dbReference>
<dbReference type="PROSITE" id="PS50975">
    <property type="entry name" value="ATP_GRASP"/>
    <property type="match status" value="1"/>
</dbReference>
<evidence type="ECO:0000250" key="1"/>
<evidence type="ECO:0000255" key="2">
    <source>
        <dbReference type="PROSITE-ProRule" id="PRU00409"/>
    </source>
</evidence>
<evidence type="ECO:0000256" key="3">
    <source>
        <dbReference type="SAM" id="MobiDB-lite"/>
    </source>
</evidence>
<evidence type="ECO:0000269" key="4">
    <source>
    </source>
</evidence>
<evidence type="ECO:0000269" key="5">
    <source>
    </source>
</evidence>
<evidence type="ECO:0000303" key="6">
    <source>
    </source>
</evidence>
<evidence type="ECO:0000303" key="7">
    <source>
    </source>
</evidence>
<evidence type="ECO:0000305" key="8"/>
<name>RIMKB_MOUSE</name>
<gene>
    <name type="primary">Rimklb</name>
    <name type="synonym">Fam80b</name>
    <name type="synonym">Kiaa1238</name>
</gene>
<sequence>MCSSVTGKLWFLTDRRIREDYPQKEILRALKAKCCEEELDFRAVVMDEMVLTVEQGNLGLRISGELISAYPQVVVVRVPTPWVQSDSDITVLRHLEKMGCRLMNRPQAILNCVNKFWTFQELAGHGVPLPDTFSYGGHENFAKMIDEAEVLEFPMVVKNTRGHRGKAVFLARDKHHLADLSHLIRHEAPYLFQKYIKESHGRDVRVIVVGGRVVGTMLRCSTDGRMQSNCSLGGVGMMCSLSEQGKQLAIQVSNILGTDVCGIDLLMKDDGSFCVCEANANVGFIAFDKACNLDVAGIIADYAASLLPAGRLTRRMSLLSVVSTASETSEPELGPPASAAVDNMSASSSSVDSDPESTTEREMLTKLPGGLFNMNQLLANEIKLLVE</sequence>
<reference key="1">
    <citation type="journal article" date="2004" name="DNA Res.">
        <title>Prediction of the coding sequences of mouse homologues of KIAA gene: IV. The complete nucleotide sequences of 500 mouse KIAA-homologous cDNAs identified by screening of terminal sequences of cDNA clones randomly sampled from size-fractionated libraries.</title>
        <authorList>
            <person name="Okazaki N."/>
            <person name="Kikuno R."/>
            <person name="Ohara R."/>
            <person name="Inamoto S."/>
            <person name="Koseki H."/>
            <person name="Hiraoka S."/>
            <person name="Saga Y."/>
            <person name="Seino S."/>
            <person name="Nishimura M."/>
            <person name="Kaisho T."/>
            <person name="Hoshino K."/>
            <person name="Kitamura H."/>
            <person name="Nagase T."/>
            <person name="Ohara O."/>
            <person name="Koga H."/>
        </authorList>
    </citation>
    <scope>NUCLEOTIDE SEQUENCE [LARGE SCALE MRNA] (ISOFORM 1)</scope>
    <source>
        <tissue>Fetal brain</tissue>
    </source>
</reference>
<reference key="2">
    <citation type="journal article" date="2005" name="Science">
        <title>The transcriptional landscape of the mammalian genome.</title>
        <authorList>
            <person name="Carninci P."/>
            <person name="Kasukawa T."/>
            <person name="Katayama S."/>
            <person name="Gough J."/>
            <person name="Frith M.C."/>
            <person name="Maeda N."/>
            <person name="Oyama R."/>
            <person name="Ravasi T."/>
            <person name="Lenhard B."/>
            <person name="Wells C."/>
            <person name="Kodzius R."/>
            <person name="Shimokawa K."/>
            <person name="Bajic V.B."/>
            <person name="Brenner S.E."/>
            <person name="Batalov S."/>
            <person name="Forrest A.R."/>
            <person name="Zavolan M."/>
            <person name="Davis M.J."/>
            <person name="Wilming L.G."/>
            <person name="Aidinis V."/>
            <person name="Allen J.E."/>
            <person name="Ambesi-Impiombato A."/>
            <person name="Apweiler R."/>
            <person name="Aturaliya R.N."/>
            <person name="Bailey T.L."/>
            <person name="Bansal M."/>
            <person name="Baxter L."/>
            <person name="Beisel K.W."/>
            <person name="Bersano T."/>
            <person name="Bono H."/>
            <person name="Chalk A.M."/>
            <person name="Chiu K.P."/>
            <person name="Choudhary V."/>
            <person name="Christoffels A."/>
            <person name="Clutterbuck D.R."/>
            <person name="Crowe M.L."/>
            <person name="Dalla E."/>
            <person name="Dalrymple B.P."/>
            <person name="de Bono B."/>
            <person name="Della Gatta G."/>
            <person name="di Bernardo D."/>
            <person name="Down T."/>
            <person name="Engstrom P."/>
            <person name="Fagiolini M."/>
            <person name="Faulkner G."/>
            <person name="Fletcher C.F."/>
            <person name="Fukushima T."/>
            <person name="Furuno M."/>
            <person name="Futaki S."/>
            <person name="Gariboldi M."/>
            <person name="Georgii-Hemming P."/>
            <person name="Gingeras T.R."/>
            <person name="Gojobori T."/>
            <person name="Green R.E."/>
            <person name="Gustincich S."/>
            <person name="Harbers M."/>
            <person name="Hayashi Y."/>
            <person name="Hensch T.K."/>
            <person name="Hirokawa N."/>
            <person name="Hill D."/>
            <person name="Huminiecki L."/>
            <person name="Iacono M."/>
            <person name="Ikeo K."/>
            <person name="Iwama A."/>
            <person name="Ishikawa T."/>
            <person name="Jakt M."/>
            <person name="Kanapin A."/>
            <person name="Katoh M."/>
            <person name="Kawasawa Y."/>
            <person name="Kelso J."/>
            <person name="Kitamura H."/>
            <person name="Kitano H."/>
            <person name="Kollias G."/>
            <person name="Krishnan S.P."/>
            <person name="Kruger A."/>
            <person name="Kummerfeld S.K."/>
            <person name="Kurochkin I.V."/>
            <person name="Lareau L.F."/>
            <person name="Lazarevic D."/>
            <person name="Lipovich L."/>
            <person name="Liu J."/>
            <person name="Liuni S."/>
            <person name="McWilliam S."/>
            <person name="Madan Babu M."/>
            <person name="Madera M."/>
            <person name="Marchionni L."/>
            <person name="Matsuda H."/>
            <person name="Matsuzawa S."/>
            <person name="Miki H."/>
            <person name="Mignone F."/>
            <person name="Miyake S."/>
            <person name="Morris K."/>
            <person name="Mottagui-Tabar S."/>
            <person name="Mulder N."/>
            <person name="Nakano N."/>
            <person name="Nakauchi H."/>
            <person name="Ng P."/>
            <person name="Nilsson R."/>
            <person name="Nishiguchi S."/>
            <person name="Nishikawa S."/>
            <person name="Nori F."/>
            <person name="Ohara O."/>
            <person name="Okazaki Y."/>
            <person name="Orlando V."/>
            <person name="Pang K.C."/>
            <person name="Pavan W.J."/>
            <person name="Pavesi G."/>
            <person name="Pesole G."/>
            <person name="Petrovsky N."/>
            <person name="Piazza S."/>
            <person name="Reed J."/>
            <person name="Reid J.F."/>
            <person name="Ring B.Z."/>
            <person name="Ringwald M."/>
            <person name="Rost B."/>
            <person name="Ruan Y."/>
            <person name="Salzberg S.L."/>
            <person name="Sandelin A."/>
            <person name="Schneider C."/>
            <person name="Schoenbach C."/>
            <person name="Sekiguchi K."/>
            <person name="Semple C.A."/>
            <person name="Seno S."/>
            <person name="Sessa L."/>
            <person name="Sheng Y."/>
            <person name="Shibata Y."/>
            <person name="Shimada H."/>
            <person name="Shimada K."/>
            <person name="Silva D."/>
            <person name="Sinclair B."/>
            <person name="Sperling S."/>
            <person name="Stupka E."/>
            <person name="Sugiura K."/>
            <person name="Sultana R."/>
            <person name="Takenaka Y."/>
            <person name="Taki K."/>
            <person name="Tammoja K."/>
            <person name="Tan S.L."/>
            <person name="Tang S."/>
            <person name="Taylor M.S."/>
            <person name="Tegner J."/>
            <person name="Teichmann S.A."/>
            <person name="Ueda H.R."/>
            <person name="van Nimwegen E."/>
            <person name="Verardo R."/>
            <person name="Wei C.L."/>
            <person name="Yagi K."/>
            <person name="Yamanishi H."/>
            <person name="Zabarovsky E."/>
            <person name="Zhu S."/>
            <person name="Zimmer A."/>
            <person name="Hide W."/>
            <person name="Bult C."/>
            <person name="Grimmond S.M."/>
            <person name="Teasdale R.D."/>
            <person name="Liu E.T."/>
            <person name="Brusic V."/>
            <person name="Quackenbush J."/>
            <person name="Wahlestedt C."/>
            <person name="Mattick J.S."/>
            <person name="Hume D.A."/>
            <person name="Kai C."/>
            <person name="Sasaki D."/>
            <person name="Tomaru Y."/>
            <person name="Fukuda S."/>
            <person name="Kanamori-Katayama M."/>
            <person name="Suzuki M."/>
            <person name="Aoki J."/>
            <person name="Arakawa T."/>
            <person name="Iida J."/>
            <person name="Imamura K."/>
            <person name="Itoh M."/>
            <person name="Kato T."/>
            <person name="Kawaji H."/>
            <person name="Kawagashira N."/>
            <person name="Kawashima T."/>
            <person name="Kojima M."/>
            <person name="Kondo S."/>
            <person name="Konno H."/>
            <person name="Nakano K."/>
            <person name="Ninomiya N."/>
            <person name="Nishio T."/>
            <person name="Okada M."/>
            <person name="Plessy C."/>
            <person name="Shibata K."/>
            <person name="Shiraki T."/>
            <person name="Suzuki S."/>
            <person name="Tagami M."/>
            <person name="Waki K."/>
            <person name="Watahiki A."/>
            <person name="Okamura-Oho Y."/>
            <person name="Suzuki H."/>
            <person name="Kawai J."/>
            <person name="Hayashizaki Y."/>
        </authorList>
    </citation>
    <scope>NUCLEOTIDE SEQUENCE [LARGE SCALE MRNA] (ISOFORMS 2 AND 3)</scope>
    <source>
        <strain>C57BL/6J</strain>
        <tissue>Spinal cord</tissue>
        <tissue>Testis</tissue>
    </source>
</reference>
<reference key="3">
    <citation type="journal article" date="2004" name="Genome Res.">
        <title>The status, quality, and expansion of the NIH full-length cDNA project: the Mammalian Gene Collection (MGC).</title>
        <authorList>
            <consortium name="The MGC Project Team"/>
        </authorList>
    </citation>
    <scope>NUCLEOTIDE SEQUENCE [LARGE SCALE MRNA] (ISOFORM 1)</scope>
    <source>
        <strain>C57BL/6J</strain>
        <tissue>Brain</tissue>
    </source>
</reference>
<reference key="4">
    <citation type="journal article" date="2010" name="J. Biol. Chem.">
        <title>Molecular characterization of N-acetylaspartylglutamate synthetase.</title>
        <authorList>
            <person name="Becker I."/>
            <person name="Lodder J."/>
            <person name="Gieselmann V."/>
            <person name="Eckhardt M."/>
        </authorList>
    </citation>
    <scope>FUNCTION</scope>
    <scope>CATALYTIC ACTIVITY</scope>
    <scope>SUBCELLULAR LOCATION</scope>
    <scope>TISSUE SPECIFICITY</scope>
</reference>
<reference key="5">
    <citation type="journal article" date="2010" name="J. Biol. Chem.">
        <title>Molecular identification of N-acetylaspartylglutamate synthase and beta-citrylglutamate synthase.</title>
        <authorList>
            <person name="Collard F."/>
            <person name="Stroobant V."/>
            <person name="Lamosa P."/>
            <person name="Kapanda C.N."/>
            <person name="Lambert D.M."/>
            <person name="Muccioli G.G."/>
            <person name="Poupaert J.H."/>
            <person name="Opperdoes F."/>
            <person name="Van Schaftingen E."/>
        </authorList>
    </citation>
    <scope>FUNCTION</scope>
    <scope>CATALYTIC ACTIVITY</scope>
</reference>
<keyword id="KW-0025">Alternative splicing</keyword>
<keyword id="KW-0067">ATP-binding</keyword>
<keyword id="KW-0963">Cytoplasm</keyword>
<keyword id="KW-0436">Ligase</keyword>
<keyword id="KW-0460">Magnesium</keyword>
<keyword id="KW-0464">Manganese</keyword>
<keyword id="KW-0479">Metal-binding</keyword>
<keyword id="KW-0547">Nucleotide-binding</keyword>
<keyword id="KW-1185">Reference proteome</keyword>
<proteinExistence type="evidence at protein level"/>
<comment type="function">
    <text evidence="4 5">Catalyzes the synthesis of beta-citryl-L-glutamate and N-acetyl-L-aspartyl-L-glutamate. Beta-citryl-L-glutamate is synthesized more efficiently than N-acetyl-L-aspartyl-L-glutamate.</text>
</comment>
<comment type="catalytic activity">
    <reaction evidence="4 5">
        <text>citrate + L-glutamate + ATP = beta-citrylglutamate + ADP + phosphate + H(+)</text>
        <dbReference type="Rhea" id="RHEA:40043"/>
        <dbReference type="ChEBI" id="CHEBI:15378"/>
        <dbReference type="ChEBI" id="CHEBI:16947"/>
        <dbReference type="ChEBI" id="CHEBI:29985"/>
        <dbReference type="ChEBI" id="CHEBI:30616"/>
        <dbReference type="ChEBI" id="CHEBI:43474"/>
        <dbReference type="ChEBI" id="CHEBI:76942"/>
        <dbReference type="ChEBI" id="CHEBI:456216"/>
        <dbReference type="EC" id="6.3.1.17"/>
    </reaction>
</comment>
<comment type="catalytic activity">
    <reaction evidence="4 5">
        <text>N-acetyl-L-aspartate + L-glutamate + ATP = N-acetyl-L-aspartyl-L-glutamate + ADP + phosphate + H(+)</text>
        <dbReference type="Rhea" id="RHEA:40035"/>
        <dbReference type="ChEBI" id="CHEBI:15378"/>
        <dbReference type="ChEBI" id="CHEBI:16953"/>
        <dbReference type="ChEBI" id="CHEBI:29985"/>
        <dbReference type="ChEBI" id="CHEBI:30616"/>
        <dbReference type="ChEBI" id="CHEBI:43474"/>
        <dbReference type="ChEBI" id="CHEBI:76931"/>
        <dbReference type="ChEBI" id="CHEBI:456216"/>
        <dbReference type="EC" id="6.3.2.41"/>
    </reaction>
</comment>
<comment type="cofactor">
    <cofactor evidence="1">
        <name>Mg(2+)</name>
        <dbReference type="ChEBI" id="CHEBI:18420"/>
    </cofactor>
    <cofactor evidence="1">
        <name>Mn(2+)</name>
        <dbReference type="ChEBI" id="CHEBI:29035"/>
    </cofactor>
    <text evidence="1">Binds 2 magnesium or manganese ions per subunit.</text>
</comment>
<comment type="subcellular location">
    <subcellularLocation>
        <location evidence="4">Cytoplasm</location>
    </subcellularLocation>
</comment>
<comment type="alternative products">
    <event type="alternative splicing"/>
    <isoform>
        <id>Q80WS1-1</id>
        <name>1</name>
        <sequence type="displayed"/>
    </isoform>
    <isoform>
        <id>Q80WS1-2</id>
        <name>2</name>
        <sequence type="described" ref="VSP_024200 VSP_024201"/>
    </isoform>
    <isoform>
        <id>Q80WS1-3</id>
        <name>3</name>
        <sequence type="described" ref="VSP_024200 VSP_024201 VSP_024202 VSP_024203"/>
    </isoform>
</comment>
<comment type="tissue specificity">
    <text evidence="4">Strongly expressed in brain and testis. Expressed in eyes, thymus, lung, kidney, skeletal muscle, spleen, skin and heart. Expressed in neurons of the neocortex, the gray matter and Purkinje cells.</text>
</comment>
<comment type="miscellaneous">
    <text evidence="7">N-acetyl-L-aspartyl-L-glutamate (NAAG) is the most abundant dipeptide present in vertebrate central nervous system (CNS). Beta-citryl-L-glutamate, a structural analog of NAAG, is present in testis and immature brain.</text>
</comment>
<comment type="similarity">
    <text evidence="8">Belongs to the RimK family.</text>
</comment>
<comment type="sequence caution" evidence="8">
    <conflict type="erroneous initiation">
        <sequence resource="EMBL-CDS" id="BAD32413"/>
    </conflict>
    <text>Extended N-terminus.</text>
</comment>
<organism>
    <name type="scientific">Mus musculus</name>
    <name type="common">Mouse</name>
    <dbReference type="NCBI Taxonomy" id="10090"/>
    <lineage>
        <taxon>Eukaryota</taxon>
        <taxon>Metazoa</taxon>
        <taxon>Chordata</taxon>
        <taxon>Craniata</taxon>
        <taxon>Vertebrata</taxon>
        <taxon>Euteleostomi</taxon>
        <taxon>Mammalia</taxon>
        <taxon>Eutheria</taxon>
        <taxon>Euarchontoglires</taxon>
        <taxon>Glires</taxon>
        <taxon>Rodentia</taxon>
        <taxon>Myomorpha</taxon>
        <taxon>Muroidea</taxon>
        <taxon>Muridae</taxon>
        <taxon>Murinae</taxon>
        <taxon>Mus</taxon>
        <taxon>Mus</taxon>
    </lineage>
</organism>
<protein>
    <recommendedName>
        <fullName>Beta-citrylglutamate synthase B</fullName>
        <ecNumber evidence="4 5">6.3.1.17</ecNumber>
    </recommendedName>
    <alternativeName>
        <fullName>N-acetyl-aspartylglutamate synthetase B</fullName>
        <shortName>NAAG synthetase B</shortName>
        <shortName>NAAGS</shortName>
        <ecNumber evidence="4">6.3.2.41</ecNumber>
    </alternativeName>
    <alternativeName>
        <fullName>Ribosomal protein S6 modification-like protein B</fullName>
    </alternativeName>
</protein>
<accession>Q80WS1</accession>
<accession>Q69ZN3</accession>
<accession>Q8CA77</accession>
<accession>Q9D3Z1</accession>